<dbReference type="EMBL" id="U19761">
    <property type="protein sequence ID" value="AAA61910.1"/>
    <property type="molecule type" value="Genomic_DNA"/>
</dbReference>
<dbReference type="SMR" id="P45989"/>
<dbReference type="GO" id="GO:0009289">
    <property type="term" value="C:pilus"/>
    <property type="evidence" value="ECO:0007669"/>
    <property type="project" value="UniProtKB-SubCell"/>
</dbReference>
<dbReference type="GO" id="GO:0043709">
    <property type="term" value="P:cell adhesion involved in single-species biofilm formation"/>
    <property type="evidence" value="ECO:0007669"/>
    <property type="project" value="TreeGrafter"/>
</dbReference>
<dbReference type="Gene3D" id="2.60.40.1090">
    <property type="entry name" value="Fimbrial-type adhesion domain"/>
    <property type="match status" value="1"/>
</dbReference>
<dbReference type="InterPro" id="IPR000259">
    <property type="entry name" value="Adhesion_dom_fimbrial"/>
</dbReference>
<dbReference type="InterPro" id="IPR036937">
    <property type="entry name" value="Adhesion_dom_fimbrial_sf"/>
</dbReference>
<dbReference type="InterPro" id="IPR008966">
    <property type="entry name" value="Adhesion_dom_sf"/>
</dbReference>
<dbReference type="InterPro" id="IPR050263">
    <property type="entry name" value="Bact_Fimbrial_Adh_Pro"/>
</dbReference>
<dbReference type="PANTHER" id="PTHR33420:SF3">
    <property type="entry name" value="FIMBRIAL SUBUNIT ELFA"/>
    <property type="match status" value="1"/>
</dbReference>
<dbReference type="PANTHER" id="PTHR33420">
    <property type="entry name" value="FIMBRIAL SUBUNIT ELFA-RELATED"/>
    <property type="match status" value="1"/>
</dbReference>
<dbReference type="Pfam" id="PF00419">
    <property type="entry name" value="Fimbrial"/>
    <property type="match status" value="1"/>
</dbReference>
<dbReference type="SUPFAM" id="SSF49401">
    <property type="entry name" value="Bacterial adhesins"/>
    <property type="match status" value="1"/>
</dbReference>
<comment type="function">
    <text>Mediates adherence to oropharyngeal epithelial cells. Helps the airway colonization process.</text>
</comment>
<comment type="subcellular location">
    <subcellularLocation>
        <location>Fimbrium</location>
    </subcellularLocation>
</comment>
<comment type="similarity">
    <text evidence="2">Belongs to the fimbrial protein family.</text>
</comment>
<protein>
    <recommendedName>
        <fullName>Major fimbrial subunit</fullName>
    </recommendedName>
    <alternativeName>
        <fullName>Major pilin</fullName>
    </alternativeName>
</protein>
<sequence length="213" mass="23191">MKKTLLGSLILLAFAGNVQADINTETSGKVTFFGKVVENTCKVKTEHKNLSVVLNDVGKNSLSTKVNTAMPTPFTITLQNCDPTTANGTANKANKVGLYFYSWKNVDKENNFTLKNEQTTADYATNVNIQLMESNGTKAISVVGKETEDFMHTNNNGVALNQTHPNNTHISGSTQLTTGTNELPLHFIAQYYATNKATAGKVQSSVDFQIAYE</sequence>
<organism>
    <name type="scientific">Haemophilus influenzae</name>
    <dbReference type="NCBI Taxonomy" id="727"/>
    <lineage>
        <taxon>Bacteria</taxon>
        <taxon>Pseudomonadati</taxon>
        <taxon>Pseudomonadota</taxon>
        <taxon>Gammaproteobacteria</taxon>
        <taxon>Pasteurellales</taxon>
        <taxon>Pasteurellaceae</taxon>
        <taxon>Haemophilus</taxon>
    </lineage>
</organism>
<evidence type="ECO:0000250" key="1"/>
<evidence type="ECO:0000305" key="2"/>
<feature type="signal peptide" evidence="1">
    <location>
        <begin position="1"/>
        <end position="20"/>
    </location>
</feature>
<feature type="chain" id="PRO_0000009219" description="Major fimbrial subunit">
    <location>
        <begin position="21"/>
        <end position="213"/>
    </location>
</feature>
<feature type="disulfide bond" evidence="2">
    <location>
        <begin position="41"/>
        <end position="81"/>
    </location>
</feature>
<keyword id="KW-1015">Disulfide bond</keyword>
<keyword id="KW-0281">Fimbrium</keyword>
<keyword id="KW-0732">Signal</keyword>
<reference key="1">
    <citation type="submission" date="1995-01" db="EMBL/GenBank/DDBJ databases">
        <authorList>
            <person name="Green B.A."/>
            <person name="Olmsted S.B."/>
            <person name="Novitsky B.K."/>
        </authorList>
    </citation>
    <scope>NUCLEOTIDE SEQUENCE [GENOMIC DNA]</scope>
    <source>
        <strain>86-1249 / LKP serotype 4</strain>
    </source>
</reference>
<name>HIFA4_HAEIF</name>
<gene>
    <name type="primary">hifA</name>
</gene>
<accession>P45989</accession>
<proteinExistence type="inferred from homology"/>